<organism>
    <name type="scientific">Mycolicibacterium fortuitum</name>
    <name type="common">Mycobacterium fortuitum</name>
    <dbReference type="NCBI Taxonomy" id="1766"/>
    <lineage>
        <taxon>Bacteria</taxon>
        <taxon>Bacillati</taxon>
        <taxon>Actinomycetota</taxon>
        <taxon>Actinomycetes</taxon>
        <taxon>Mycobacteriales</taxon>
        <taxon>Mycobacteriaceae</taxon>
        <taxon>Mycolicibacterium</taxon>
    </lineage>
</organism>
<protein>
    <recommendedName>
        <fullName>Dihydropteroate synthase type-1</fullName>
        <ecNumber>2.5.1.15</ecNumber>
    </recommendedName>
    <alternativeName>
        <fullName>Dihydropteroate pyrophosphorylase type I</fullName>
    </alternativeName>
    <alternativeName>
        <fullName>Dihydropteroate synthase type I</fullName>
        <shortName>DHPS</shortName>
    </alternativeName>
</protein>
<gene>
    <name type="primary">sulI</name>
    <name type="synonym">suf3</name>
</gene>
<keyword id="KW-0046">Antibiotic resistance</keyword>
<keyword id="KW-0289">Folate biosynthesis</keyword>
<keyword id="KW-0460">Magnesium</keyword>
<keyword id="KW-0479">Metal-binding</keyword>
<keyword id="KW-0808">Transferase</keyword>
<keyword id="KW-0814">Transposable element</keyword>
<proteinExistence type="inferred from homology"/>
<name>DHP1_MYCFO</name>
<reference key="1">
    <citation type="journal article" date="1990" name="Nature">
        <title>Transposition of an antibiotic resistance element in mycobacteria.</title>
        <authorList>
            <person name="Martin C."/>
            <person name="Timm J."/>
            <person name="Rauzier J."/>
            <person name="Gomez-Lus R."/>
            <person name="Davies J."/>
            <person name="Gicquel B."/>
        </authorList>
    </citation>
    <scope>NUCLEOTIDE SEQUENCE [GENOMIC DNA]</scope>
    <scope>INVOLVEMENT IN RESISTANCE TO SULFONAMIDE</scope>
    <source>
        <strain>FC1</strain>
        <transposon>Tn610</transposon>
    </source>
</reference>
<feature type="chain" id="PRO_0000321868" description="Dihydropteroate synthase type-1">
    <location>
        <begin position="1"/>
        <end position="283"/>
    </location>
</feature>
<feature type="domain" description="Pterin-binding" evidence="4">
    <location>
        <begin position="6"/>
        <end position="262"/>
    </location>
</feature>
<feature type="binding site" evidence="3">
    <location>
        <position position="13"/>
    </location>
    <ligand>
        <name>Mg(2+)</name>
        <dbReference type="ChEBI" id="CHEBI:18420"/>
    </ligand>
</feature>
<feature type="binding site" evidence="2">
    <location>
        <position position="86"/>
    </location>
    <ligand>
        <name>(7,8-dihydropterin-6-yl)methyl diphosphate</name>
        <dbReference type="ChEBI" id="CHEBI:72950"/>
    </ligand>
</feature>
<feature type="binding site" evidence="2">
    <location>
        <position position="105"/>
    </location>
    <ligand>
        <name>(7,8-dihydropterin-6-yl)methyl diphosphate</name>
        <dbReference type="ChEBI" id="CHEBI:72950"/>
    </ligand>
</feature>
<feature type="binding site" evidence="2">
    <location>
        <position position="177"/>
    </location>
    <ligand>
        <name>(7,8-dihydropterin-6-yl)methyl diphosphate</name>
        <dbReference type="ChEBI" id="CHEBI:72950"/>
    </ligand>
</feature>
<feature type="binding site" evidence="2">
    <location>
        <position position="216"/>
    </location>
    <ligand>
        <name>(7,8-dihydropterin-6-yl)methyl diphosphate</name>
        <dbReference type="ChEBI" id="CHEBI:72950"/>
    </ligand>
</feature>
<feature type="binding site" evidence="2">
    <location>
        <begin position="250"/>
        <end position="252"/>
    </location>
    <ligand>
        <name>(7,8-dihydropterin-6-yl)methyl diphosphate</name>
        <dbReference type="ChEBI" id="CHEBI:72950"/>
    </ligand>
</feature>
<accession>Q49184</accession>
<dbReference type="EC" id="2.5.1.15"/>
<dbReference type="EMBL" id="X53635">
    <property type="protein sequence ID" value="CAA37684.1"/>
    <property type="molecule type" value="Genomic_DNA"/>
</dbReference>
<dbReference type="PIR" id="S10928">
    <property type="entry name" value="S10928"/>
</dbReference>
<dbReference type="SMR" id="Q49184"/>
<dbReference type="DrugBank" id="DB00891">
    <property type="generic name" value="Sulfapyridine"/>
</dbReference>
<dbReference type="DrugCentral" id="Q49184"/>
<dbReference type="UniPathway" id="UPA00077">
    <property type="reaction ID" value="UER00156"/>
</dbReference>
<dbReference type="GO" id="GO:0005829">
    <property type="term" value="C:cytosol"/>
    <property type="evidence" value="ECO:0007669"/>
    <property type="project" value="TreeGrafter"/>
</dbReference>
<dbReference type="GO" id="GO:0004156">
    <property type="term" value="F:dihydropteroate synthase activity"/>
    <property type="evidence" value="ECO:0007669"/>
    <property type="project" value="UniProtKB-EC"/>
</dbReference>
<dbReference type="GO" id="GO:0046872">
    <property type="term" value="F:metal ion binding"/>
    <property type="evidence" value="ECO:0007669"/>
    <property type="project" value="UniProtKB-KW"/>
</dbReference>
<dbReference type="GO" id="GO:0046656">
    <property type="term" value="P:folic acid biosynthetic process"/>
    <property type="evidence" value="ECO:0007669"/>
    <property type="project" value="UniProtKB-KW"/>
</dbReference>
<dbReference type="GO" id="GO:0046677">
    <property type="term" value="P:response to antibiotic"/>
    <property type="evidence" value="ECO:0007669"/>
    <property type="project" value="UniProtKB-KW"/>
</dbReference>
<dbReference type="GO" id="GO:0046654">
    <property type="term" value="P:tetrahydrofolate biosynthetic process"/>
    <property type="evidence" value="ECO:0007669"/>
    <property type="project" value="UniProtKB-UniPathway"/>
</dbReference>
<dbReference type="CDD" id="cd00739">
    <property type="entry name" value="DHPS"/>
    <property type="match status" value="1"/>
</dbReference>
<dbReference type="Gene3D" id="3.20.20.20">
    <property type="entry name" value="Dihydropteroate synthase-like"/>
    <property type="match status" value="1"/>
</dbReference>
<dbReference type="InterPro" id="IPR045031">
    <property type="entry name" value="DHP_synth-like"/>
</dbReference>
<dbReference type="InterPro" id="IPR006390">
    <property type="entry name" value="DHP_synth_dom"/>
</dbReference>
<dbReference type="InterPro" id="IPR011005">
    <property type="entry name" value="Dihydropteroate_synth-like_sf"/>
</dbReference>
<dbReference type="InterPro" id="IPR000489">
    <property type="entry name" value="Pterin-binding_dom"/>
</dbReference>
<dbReference type="NCBIfam" id="TIGR01496">
    <property type="entry name" value="DHPS"/>
    <property type="match status" value="1"/>
</dbReference>
<dbReference type="NCBIfam" id="NF000294">
    <property type="entry name" value="Sul1"/>
    <property type="match status" value="1"/>
</dbReference>
<dbReference type="PANTHER" id="PTHR20941">
    <property type="entry name" value="FOLATE SYNTHESIS PROTEINS"/>
    <property type="match status" value="1"/>
</dbReference>
<dbReference type="PANTHER" id="PTHR20941:SF1">
    <property type="entry name" value="FOLIC ACID SYNTHESIS PROTEIN FOL1"/>
    <property type="match status" value="1"/>
</dbReference>
<dbReference type="Pfam" id="PF00809">
    <property type="entry name" value="Pterin_bind"/>
    <property type="match status" value="1"/>
</dbReference>
<dbReference type="SUPFAM" id="SSF51717">
    <property type="entry name" value="Dihydropteroate synthetase-like"/>
    <property type="match status" value="1"/>
</dbReference>
<dbReference type="PROSITE" id="PS00792">
    <property type="entry name" value="DHPS_1"/>
    <property type="match status" value="1"/>
</dbReference>
<dbReference type="PROSITE" id="PS00793">
    <property type="entry name" value="DHPS_2"/>
    <property type="match status" value="1"/>
</dbReference>
<dbReference type="PROSITE" id="PS50972">
    <property type="entry name" value="PTERIN_BINDING"/>
    <property type="match status" value="1"/>
</dbReference>
<sequence>MLRSRVTVFGILNLTEDSFFDESRRLDPAGAVTAAIEMLRVGSDVVDVGPAASHPDARPVSPADEIRRIAPLLDALSDQMHRVSIDSFQPETQRYALKRGVGYLNDIQGFPDPALYPDIAEADCRLVVMHSAQRDGIATRTGHLRPEDALDEIVRFFEARVSALRRSGVAADRLILDPGMGFFLSPAPETSLHVLSNLQKLKSALGLPLLVSVSRKSFLGATVGLPVKDLGPASLAAELHAIGNGADYVRTHAPGDLRSAITFSETLAKFRSRDARDRGLDHA</sequence>
<comment type="function">
    <text evidence="2 5">Catalyzes the condensation of para-aminobenzoate (pABA) with 6-hydroxymethyl-7,8-dihydropterin diphosphate (DHPt-PP) to form 7,8-dihydropteroate (H2Pte), the immediate precursor of folate derivatives (By similarity). Implicated in resistance to sulfonamide (PubMed:2163027).</text>
</comment>
<comment type="catalytic activity">
    <reaction evidence="2">
        <text>(7,8-dihydropterin-6-yl)methyl diphosphate + 4-aminobenzoate = 7,8-dihydropteroate + diphosphate</text>
        <dbReference type="Rhea" id="RHEA:19949"/>
        <dbReference type="ChEBI" id="CHEBI:17836"/>
        <dbReference type="ChEBI" id="CHEBI:17839"/>
        <dbReference type="ChEBI" id="CHEBI:33019"/>
        <dbReference type="ChEBI" id="CHEBI:72950"/>
        <dbReference type="EC" id="2.5.1.15"/>
    </reaction>
</comment>
<comment type="cofactor">
    <cofactor evidence="2">
        <name>Mg(2+)</name>
        <dbReference type="ChEBI" id="CHEBI:18420"/>
    </cofactor>
</comment>
<comment type="pathway">
    <text>Cofactor biosynthesis; tetrahydrofolate biosynthesis; 7,8-dihydrofolate from 2-amino-4-hydroxy-6-hydroxymethyl-7,8-dihydropteridine diphosphate and 4-aminobenzoate: step 1/2.</text>
</comment>
<comment type="subunit">
    <text evidence="1">Homodimer or homotrimer.</text>
</comment>
<comment type="miscellaneous">
    <text>The sulI gene is located on various large self-transmissible resistance plasmids and on transposons related to Tn21.</text>
</comment>
<comment type="similarity">
    <text evidence="6">Belongs to the DHPS family.</text>
</comment>
<evidence type="ECO:0000250" key="1"/>
<evidence type="ECO:0000250" key="2">
    <source>
        <dbReference type="UniProtKB" id="P0AC13"/>
    </source>
</evidence>
<evidence type="ECO:0000250" key="3">
    <source>
        <dbReference type="UniProtKB" id="P9WND1"/>
    </source>
</evidence>
<evidence type="ECO:0000255" key="4">
    <source>
        <dbReference type="PROSITE-ProRule" id="PRU00334"/>
    </source>
</evidence>
<evidence type="ECO:0000269" key="5">
    <source>
    </source>
</evidence>
<evidence type="ECO:0000305" key="6"/>